<reference key="1">
    <citation type="journal article" date="2009" name="PLoS Genet.">
        <title>Organised genome dynamics in the Escherichia coli species results in highly diverse adaptive paths.</title>
        <authorList>
            <person name="Touchon M."/>
            <person name="Hoede C."/>
            <person name="Tenaillon O."/>
            <person name="Barbe V."/>
            <person name="Baeriswyl S."/>
            <person name="Bidet P."/>
            <person name="Bingen E."/>
            <person name="Bonacorsi S."/>
            <person name="Bouchier C."/>
            <person name="Bouvet O."/>
            <person name="Calteau A."/>
            <person name="Chiapello H."/>
            <person name="Clermont O."/>
            <person name="Cruveiller S."/>
            <person name="Danchin A."/>
            <person name="Diard M."/>
            <person name="Dossat C."/>
            <person name="Karoui M.E."/>
            <person name="Frapy E."/>
            <person name="Garry L."/>
            <person name="Ghigo J.M."/>
            <person name="Gilles A.M."/>
            <person name="Johnson J."/>
            <person name="Le Bouguenec C."/>
            <person name="Lescat M."/>
            <person name="Mangenot S."/>
            <person name="Martinez-Jehanne V."/>
            <person name="Matic I."/>
            <person name="Nassif X."/>
            <person name="Oztas S."/>
            <person name="Petit M.A."/>
            <person name="Pichon C."/>
            <person name="Rouy Z."/>
            <person name="Ruf C.S."/>
            <person name="Schneider D."/>
            <person name="Tourret J."/>
            <person name="Vacherie B."/>
            <person name="Vallenet D."/>
            <person name="Medigue C."/>
            <person name="Rocha E.P.C."/>
            <person name="Denamur E."/>
        </authorList>
    </citation>
    <scope>NUCLEOTIDE SEQUENCE [LARGE SCALE GENOMIC DNA]</scope>
    <source>
        <strain>ED1a</strain>
    </source>
</reference>
<comment type="function">
    <text evidence="1">Catalyzes the reversible retro-aldol cleavage of 2-keto-3-deoxy-L-rhamnonate (KDR) to pyruvate and lactaldehyde.</text>
</comment>
<comment type="catalytic activity">
    <reaction evidence="1">
        <text>2-dehydro-3-deoxy-L-rhamnonate = (S)-lactaldehyde + pyruvate</text>
        <dbReference type="Rhea" id="RHEA:25784"/>
        <dbReference type="ChEBI" id="CHEBI:15361"/>
        <dbReference type="ChEBI" id="CHEBI:18041"/>
        <dbReference type="ChEBI" id="CHEBI:58371"/>
        <dbReference type="EC" id="4.1.2.53"/>
    </reaction>
</comment>
<comment type="cofactor">
    <cofactor evidence="1">
        <name>Mg(2+)</name>
        <dbReference type="ChEBI" id="CHEBI:18420"/>
    </cofactor>
    <text evidence="1">Binds 1 Mg(2+) ion per subunit.</text>
</comment>
<comment type="subunit">
    <text evidence="1">Homohexamer.</text>
</comment>
<comment type="similarity">
    <text evidence="1">Belongs to the HpcH/HpaI aldolase family. KDR aldolase subfamily.</text>
</comment>
<keyword id="KW-0456">Lyase</keyword>
<keyword id="KW-0460">Magnesium</keyword>
<keyword id="KW-0479">Metal-binding</keyword>
<dbReference type="EC" id="4.1.2.53" evidence="1"/>
<dbReference type="EMBL" id="CU928162">
    <property type="protein sequence ID" value="CAR08892.2"/>
    <property type="molecule type" value="Genomic_DNA"/>
</dbReference>
<dbReference type="SMR" id="B7MXS6"/>
<dbReference type="KEGG" id="ecq:ECED1_2711"/>
<dbReference type="HOGENOM" id="CLU_059964_1_0_6"/>
<dbReference type="Proteomes" id="UP000000748">
    <property type="component" value="Chromosome"/>
</dbReference>
<dbReference type="GO" id="GO:0005737">
    <property type="term" value="C:cytoplasm"/>
    <property type="evidence" value="ECO:0007669"/>
    <property type="project" value="TreeGrafter"/>
</dbReference>
<dbReference type="GO" id="GO:0106099">
    <property type="term" value="F:2-keto-3-deoxy-L-rhamnonate aldolase activity"/>
    <property type="evidence" value="ECO:0007669"/>
    <property type="project" value="UniProtKB-EC"/>
</dbReference>
<dbReference type="GO" id="GO:0000287">
    <property type="term" value="F:magnesium ion binding"/>
    <property type="evidence" value="ECO:0007669"/>
    <property type="project" value="UniProtKB-UniRule"/>
</dbReference>
<dbReference type="FunFam" id="3.20.20.60:FF:000004">
    <property type="entry name" value="5-keto-4-deoxy-D-glucarate aldolase"/>
    <property type="match status" value="1"/>
</dbReference>
<dbReference type="Gene3D" id="3.20.20.60">
    <property type="entry name" value="Phosphoenolpyruvate-binding domains"/>
    <property type="match status" value="1"/>
</dbReference>
<dbReference type="HAMAP" id="MF_01290">
    <property type="entry name" value="KDR_aldolase"/>
    <property type="match status" value="1"/>
</dbReference>
<dbReference type="InterPro" id="IPR005000">
    <property type="entry name" value="Aldolase/citrate-lyase_domain"/>
</dbReference>
<dbReference type="InterPro" id="IPR050251">
    <property type="entry name" value="HpcH-HpaI_aldolase"/>
</dbReference>
<dbReference type="InterPro" id="IPR023593">
    <property type="entry name" value="KDR_aldolase"/>
</dbReference>
<dbReference type="InterPro" id="IPR015813">
    <property type="entry name" value="Pyrv/PenolPyrv_kinase-like_dom"/>
</dbReference>
<dbReference type="InterPro" id="IPR040442">
    <property type="entry name" value="Pyrv_kinase-like_dom_sf"/>
</dbReference>
<dbReference type="NCBIfam" id="NF007521">
    <property type="entry name" value="PRK10128.1"/>
    <property type="match status" value="1"/>
</dbReference>
<dbReference type="PANTHER" id="PTHR30502">
    <property type="entry name" value="2-KETO-3-DEOXY-L-RHAMNONATE ALDOLASE"/>
    <property type="match status" value="1"/>
</dbReference>
<dbReference type="PANTHER" id="PTHR30502:SF5">
    <property type="entry name" value="2-KETO-3-DEOXY-L-RHAMNONATE ALDOLASE"/>
    <property type="match status" value="1"/>
</dbReference>
<dbReference type="Pfam" id="PF03328">
    <property type="entry name" value="HpcH_HpaI"/>
    <property type="match status" value="1"/>
</dbReference>
<dbReference type="SUPFAM" id="SSF51621">
    <property type="entry name" value="Phosphoenolpyruvate/pyruvate domain"/>
    <property type="match status" value="1"/>
</dbReference>
<name>RHMA_ECO81</name>
<sequence>MNALLTNPFKERLRKGEVQIGLWLSSTTAYMAEIAATSGYDWLLIDGEHAPNTIQDLYHQLQAVAPYASHPVIRPVEGSKPLIKQVLDIGAQTLLIPMVDTADQARQVVSATRYPPYGERGVGASVARAARWGRIENYMAQVNDSLCLLVQVESKTALDNLDEILDVEGIDGVFIGPADLSASLGYPDNAGHPEVQRIIETSIRRIRAAGKAAGFLAVAPDMAQQCLAWGANFVAVGVDTMLYSDALDQRLAMFKSGKNGPRVKGSY</sequence>
<protein>
    <recommendedName>
        <fullName evidence="1">2-keto-3-deoxy-L-rhamnonate aldolase</fullName>
        <shortName evidence="1">KDR aldolase</shortName>
        <ecNumber evidence="1">4.1.2.53</ecNumber>
    </recommendedName>
    <alternativeName>
        <fullName evidence="1">2-dehydro-3-deoxyrhamnonate aldolase</fullName>
    </alternativeName>
</protein>
<gene>
    <name evidence="1" type="primary">rhmA</name>
    <name type="ordered locus">ECED1_2711</name>
</gene>
<feature type="chain" id="PRO_1000140393" description="2-keto-3-deoxy-L-rhamnonate aldolase">
    <location>
        <begin position="1"/>
        <end position="267"/>
    </location>
</feature>
<feature type="active site" description="Proton acceptor" evidence="1">
    <location>
        <position position="49"/>
    </location>
</feature>
<feature type="binding site" evidence="1">
    <location>
        <position position="151"/>
    </location>
    <ligand>
        <name>substrate</name>
    </ligand>
</feature>
<feature type="binding site" evidence="1">
    <location>
        <position position="153"/>
    </location>
    <ligand>
        <name>Mg(2+)</name>
        <dbReference type="ChEBI" id="CHEBI:18420"/>
    </ligand>
</feature>
<feature type="binding site" evidence="1">
    <location>
        <position position="178"/>
    </location>
    <ligand>
        <name>substrate</name>
    </ligand>
</feature>
<feature type="binding site" evidence="1">
    <location>
        <position position="179"/>
    </location>
    <ligand>
        <name>Mg(2+)</name>
        <dbReference type="ChEBI" id="CHEBI:18420"/>
    </ligand>
</feature>
<feature type="binding site" evidence="1">
    <location>
        <position position="179"/>
    </location>
    <ligand>
        <name>substrate</name>
    </ligand>
</feature>
<feature type="site" description="Transition state stabilizer" evidence="1">
    <location>
        <position position="74"/>
    </location>
</feature>
<feature type="site" description="Increases basicity of active site His" evidence="1">
    <location>
        <position position="88"/>
    </location>
</feature>
<organism>
    <name type="scientific">Escherichia coli O81 (strain ED1a)</name>
    <dbReference type="NCBI Taxonomy" id="585397"/>
    <lineage>
        <taxon>Bacteria</taxon>
        <taxon>Pseudomonadati</taxon>
        <taxon>Pseudomonadota</taxon>
        <taxon>Gammaproteobacteria</taxon>
        <taxon>Enterobacterales</taxon>
        <taxon>Enterobacteriaceae</taxon>
        <taxon>Escherichia</taxon>
    </lineage>
</organism>
<evidence type="ECO:0000255" key="1">
    <source>
        <dbReference type="HAMAP-Rule" id="MF_01290"/>
    </source>
</evidence>
<proteinExistence type="inferred from homology"/>
<accession>B7MXS6</accession>